<protein>
    <recommendedName>
        <fullName>Conotoxin Lt3.4</fullName>
    </recommendedName>
    <alternativeName>
        <fullName>Lt3d</fullName>
    </alternativeName>
</protein>
<organism>
    <name type="scientific">Conus litteratus</name>
    <name type="common">Lettered cone</name>
    <dbReference type="NCBI Taxonomy" id="89445"/>
    <lineage>
        <taxon>Eukaryota</taxon>
        <taxon>Metazoa</taxon>
        <taxon>Spiralia</taxon>
        <taxon>Lophotrochozoa</taxon>
        <taxon>Mollusca</taxon>
        <taxon>Gastropoda</taxon>
        <taxon>Caenogastropoda</taxon>
        <taxon>Neogastropoda</taxon>
        <taxon>Conoidea</taxon>
        <taxon>Conidae</taxon>
        <taxon>Conus</taxon>
        <taxon>Elisaconus</taxon>
    </lineage>
</organism>
<accession>Q2I2Q2</accession>
<reference key="1">
    <citation type="journal article" date="2006" name="Genomics">
        <title>Diversity and evolution of conotoxins based on gene expression profiling of Conus litteratus.</title>
        <authorList>
            <person name="Pi C."/>
            <person name="Liu J."/>
            <person name="Peng C."/>
            <person name="Liu Y."/>
            <person name="Jiang X."/>
            <person name="Zhao Y."/>
            <person name="Tang S."/>
            <person name="Wang L."/>
            <person name="Dong M."/>
            <person name="Chen S."/>
            <person name="Xu A."/>
        </authorList>
    </citation>
    <scope>NUCLEOTIDE SEQUENCE [MRNA]</scope>
    <source>
        <tissue>Venom duct</tissue>
    </source>
</reference>
<dbReference type="EMBL" id="DQ345380">
    <property type="protein sequence ID" value="ABC74988.1"/>
    <property type="molecule type" value="mRNA"/>
</dbReference>
<dbReference type="ConoServer" id="1166">
    <property type="toxin name" value="LtIIID precursor"/>
</dbReference>
<dbReference type="GO" id="GO:0005576">
    <property type="term" value="C:extracellular region"/>
    <property type="evidence" value="ECO:0007669"/>
    <property type="project" value="UniProtKB-SubCell"/>
</dbReference>
<dbReference type="GO" id="GO:0008200">
    <property type="term" value="F:ion channel inhibitor activity"/>
    <property type="evidence" value="ECO:0007669"/>
    <property type="project" value="InterPro"/>
</dbReference>
<dbReference type="GO" id="GO:0090729">
    <property type="term" value="F:toxin activity"/>
    <property type="evidence" value="ECO:0007669"/>
    <property type="project" value="UniProtKB-KW"/>
</dbReference>
<dbReference type="InterPro" id="IPR004214">
    <property type="entry name" value="Conotoxin"/>
</dbReference>
<dbReference type="Pfam" id="PF02950">
    <property type="entry name" value="Conotoxin"/>
    <property type="match status" value="1"/>
</dbReference>
<proteinExistence type="inferred from homology"/>
<comment type="subcellular location">
    <subcellularLocation>
        <location evidence="4">Secreted</location>
    </subcellularLocation>
</comment>
<comment type="tissue specificity">
    <text evidence="5">Expressed by the venom duct.</text>
</comment>
<comment type="domain">
    <text evidence="4">The cysteine framework is III (CC-C-C-CC). Classified in the M-1 branch, since 1 residue stands between the fourth and the fifth cysteine residues.</text>
</comment>
<comment type="similarity">
    <text evidence="4">Belongs to the conotoxin M superfamily.</text>
</comment>
<sequence length="70" mass="8440">MLKMGVLLFTFLVLFPLAMFQLDADQPVERYAENKQDLNRDERMKIMLSALRQRQCCDWEWCDELCSCCW</sequence>
<keyword id="KW-1015">Disulfide bond</keyword>
<keyword id="KW-0873">Pyrrolidone carboxylic acid</keyword>
<keyword id="KW-0964">Secreted</keyword>
<keyword id="KW-0732">Signal</keyword>
<keyword id="KW-0800">Toxin</keyword>
<feature type="signal peptide" evidence="3">
    <location>
        <begin position="1"/>
        <end position="24"/>
    </location>
</feature>
<feature type="propeptide" id="PRO_0000315531" evidence="1">
    <location>
        <begin position="25"/>
        <end position="54"/>
    </location>
</feature>
<feature type="peptide" id="PRO_0000315532" description="Conotoxin Lt3.4">
    <location>
        <begin position="55"/>
        <end position="70"/>
    </location>
</feature>
<feature type="modified residue" description="Pyrrolidone carboxylic acid" evidence="1">
    <location>
        <position position="55"/>
    </location>
</feature>
<feature type="disulfide bond" evidence="2">
    <location>
        <begin position="56"/>
        <end position="68"/>
    </location>
</feature>
<feature type="disulfide bond" evidence="2">
    <location>
        <begin position="57"/>
        <end position="66"/>
    </location>
</feature>
<feature type="disulfide bond" evidence="2">
    <location>
        <begin position="62"/>
        <end position="69"/>
    </location>
</feature>
<name>CM34_CONLT</name>
<evidence type="ECO:0000250" key="1"/>
<evidence type="ECO:0000250" key="2">
    <source>
        <dbReference type="UniProtKB" id="Q5EHP3"/>
    </source>
</evidence>
<evidence type="ECO:0000255" key="3"/>
<evidence type="ECO:0000305" key="4"/>
<evidence type="ECO:0000305" key="5">
    <source>
    </source>
</evidence>